<protein>
    <recommendedName>
        <fullName>Uncharacterized protein WxcX</fullName>
    </recommendedName>
</protein>
<accession>P0C7J1</accession>
<accession>O34262</accession>
<proteinExistence type="predicted"/>
<keyword id="KW-1185">Reference proteome</keyword>
<dbReference type="EMBL" id="AE008922">
    <property type="protein sequence ID" value="AAM39945.1"/>
    <property type="status" value="ALT_INIT"/>
    <property type="molecule type" value="Genomic_DNA"/>
</dbReference>
<dbReference type="RefSeq" id="NP_636021.2">
    <property type="nucleotide sequence ID" value="NC_003902.1"/>
</dbReference>
<dbReference type="RefSeq" id="WP_019237970.1">
    <property type="nucleotide sequence ID" value="NC_003902.1"/>
</dbReference>
<dbReference type="STRING" id="190485.XCC0629"/>
<dbReference type="EnsemblBacteria" id="AAM39945">
    <property type="protein sequence ID" value="AAM39945"/>
    <property type="gene ID" value="XCC0629"/>
</dbReference>
<dbReference type="KEGG" id="xcc:XCC0629"/>
<dbReference type="PATRIC" id="fig|190485.4.peg.690"/>
<dbReference type="eggNOG" id="COG3754">
    <property type="taxonomic scope" value="Bacteria"/>
</dbReference>
<dbReference type="HOGENOM" id="CLU_939930_0_0_6"/>
<dbReference type="OrthoDB" id="9816424at2"/>
<dbReference type="PHI-base" id="PHI:7943"/>
<dbReference type="Proteomes" id="UP000001010">
    <property type="component" value="Chromosome"/>
</dbReference>
<dbReference type="CDD" id="cd11579">
    <property type="entry name" value="Glyco_tran_WbsX"/>
    <property type="match status" value="1"/>
</dbReference>
<dbReference type="Gene3D" id="3.20.20.80">
    <property type="entry name" value="Glycosidases"/>
    <property type="match status" value="1"/>
</dbReference>
<dbReference type="InterPro" id="IPR007739">
    <property type="entry name" value="RgpF"/>
</dbReference>
<dbReference type="InterPro" id="IPR032719">
    <property type="entry name" value="WbsX"/>
</dbReference>
<dbReference type="PANTHER" id="PTHR41244:SF1">
    <property type="entry name" value="GLYCOSYLTRANSFERASE"/>
    <property type="match status" value="1"/>
</dbReference>
<dbReference type="PANTHER" id="PTHR41244">
    <property type="entry name" value="RHAMNAN SYNTHESIS F"/>
    <property type="match status" value="1"/>
</dbReference>
<dbReference type="Pfam" id="PF14307">
    <property type="entry name" value="Glyco_tran_WbsX"/>
    <property type="match status" value="1"/>
</dbReference>
<dbReference type="Pfam" id="PF05045">
    <property type="entry name" value="RgpF"/>
    <property type="match status" value="1"/>
</dbReference>
<comment type="sequence caution" evidence="1">
    <conflict type="erroneous initiation">
        <sequence resource="EMBL-CDS" id="AAM39945"/>
    </conflict>
</comment>
<sequence>MSTLDRSIQARARAHLFGLLRAGFRVIPLSDATRDRWRSWFLDRHADWVPEPVRGRANHAISRRPTARSDEAAIGHVAYRTIALPETLPATLVAFYLPQFHPIPENDAWWGKGFTEWRNVSRTLPQFEGHQQPRLPADLGFYDLRTPDVMREQARLAQEYGLGAFCFYFYWFAGKTLLEMPITQWHADTSITLPFCLCWANEKWARRWDGRGHDVLIDQAHSADDDLAFIAHVARYMRNPKYLRVGDRPLLLVYRPHLLPEPVQTAARWRNWCRDNGIGEIHLAYVQGFERPDPRDIGFDAAVEFPPNMSTPPSVTARQRLVNPDFSGDVLDWRELARDMEQRPLRDYTLYPGVNPGWDNEPRRSGKGRIYLHASPRRYRDWLARTVQHRLANAPSAHRMVFINAWNEWAEGAVLEPDARLGYAWLDATRQALTRAPDVATEICSPSACVVLHAWYLDVLDEMLDAIVECGTPLRIIITTDLTKVIEVTKCIQRRGIQAEVEGFENRGRDILPFLHVANRLLDENVQLVLKLHTKKSTHRDDGNAWRGEMLTALLGPQRVDAIVNAFSTDPLAGLAAPEDHLLPVTEFIGGNADALDYLTVRTGSDAPDTNSLFASGSMFWARLEALRPLLDAHLHASEFESEQGQIDGTLAHAIERFVGLAVTHSGHRVTTVEQTLGITKTPSAQPYRYARKAP</sequence>
<evidence type="ECO:0000305" key="1"/>
<organism>
    <name type="scientific">Xanthomonas campestris pv. campestris (strain ATCC 33913 / DSM 3586 / NCPPB 528 / LMG 568 / P 25)</name>
    <dbReference type="NCBI Taxonomy" id="190485"/>
    <lineage>
        <taxon>Bacteria</taxon>
        <taxon>Pseudomonadati</taxon>
        <taxon>Pseudomonadota</taxon>
        <taxon>Gammaproteobacteria</taxon>
        <taxon>Lysobacterales</taxon>
        <taxon>Lysobacteraceae</taxon>
        <taxon>Xanthomonas</taxon>
    </lineage>
</organism>
<gene>
    <name type="primary">wxcX</name>
    <name type="ordered locus">XCC0629</name>
</gene>
<feature type="chain" id="PRO_0000065986" description="Uncharacterized protein WxcX">
    <location>
        <begin position="1"/>
        <end position="695"/>
    </location>
</feature>
<name>WXCX_XANCP</name>
<reference key="1">
    <citation type="journal article" date="2002" name="Nature">
        <title>Comparison of the genomes of two Xanthomonas pathogens with differing host specificities.</title>
        <authorList>
            <person name="da Silva A.C.R."/>
            <person name="Ferro J.A."/>
            <person name="Reinach F.C."/>
            <person name="Farah C.S."/>
            <person name="Furlan L.R."/>
            <person name="Quaggio R.B."/>
            <person name="Monteiro-Vitorello C.B."/>
            <person name="Van Sluys M.A."/>
            <person name="Almeida N.F. Jr."/>
            <person name="Alves L.M.C."/>
            <person name="do Amaral A.M."/>
            <person name="Bertolini M.C."/>
            <person name="Camargo L.E.A."/>
            <person name="Camarotte G."/>
            <person name="Cannavan F."/>
            <person name="Cardozo J."/>
            <person name="Chambergo F."/>
            <person name="Ciapina L.P."/>
            <person name="Cicarelli R.M.B."/>
            <person name="Coutinho L.L."/>
            <person name="Cursino-Santos J.R."/>
            <person name="El-Dorry H."/>
            <person name="Faria J.B."/>
            <person name="Ferreira A.J.S."/>
            <person name="Ferreira R.C.C."/>
            <person name="Ferro M.I.T."/>
            <person name="Formighieri E.F."/>
            <person name="Franco M.C."/>
            <person name="Greggio C.C."/>
            <person name="Gruber A."/>
            <person name="Katsuyama A.M."/>
            <person name="Kishi L.T."/>
            <person name="Leite R.P."/>
            <person name="Lemos E.G.M."/>
            <person name="Lemos M.V.F."/>
            <person name="Locali E.C."/>
            <person name="Machado M.A."/>
            <person name="Madeira A.M.B.N."/>
            <person name="Martinez-Rossi N.M."/>
            <person name="Martins E.C."/>
            <person name="Meidanis J."/>
            <person name="Menck C.F.M."/>
            <person name="Miyaki C.Y."/>
            <person name="Moon D.H."/>
            <person name="Moreira L.M."/>
            <person name="Novo M.T.M."/>
            <person name="Okura V.K."/>
            <person name="Oliveira M.C."/>
            <person name="Oliveira V.R."/>
            <person name="Pereira H.A."/>
            <person name="Rossi A."/>
            <person name="Sena J.A.D."/>
            <person name="Silva C."/>
            <person name="de Souza R.F."/>
            <person name="Spinola L.A.F."/>
            <person name="Takita M.A."/>
            <person name="Tamura R.E."/>
            <person name="Teixeira E.C."/>
            <person name="Tezza R.I.D."/>
            <person name="Trindade dos Santos M."/>
            <person name="Truffi D."/>
            <person name="Tsai S.M."/>
            <person name="White F.F."/>
            <person name="Setubal J.C."/>
            <person name="Kitajima J.P."/>
        </authorList>
    </citation>
    <scope>NUCLEOTIDE SEQUENCE [LARGE SCALE GENOMIC DNA]</scope>
    <source>
        <strain>ATCC 33913 / DSM 3586 / NCPPB 528 / LMG 568 / P 25</strain>
    </source>
</reference>